<gene>
    <name evidence="1" type="primary">queF</name>
    <name type="ordered locus">BCAN_A1204</name>
</gene>
<proteinExistence type="inferred from homology"/>
<evidence type="ECO:0000255" key="1">
    <source>
        <dbReference type="HAMAP-Rule" id="MF_00818"/>
    </source>
</evidence>
<dbReference type="EC" id="1.7.1.13" evidence="1"/>
<dbReference type="EMBL" id="CP000872">
    <property type="protein sequence ID" value="ABX62253.1"/>
    <property type="molecule type" value="Genomic_DNA"/>
</dbReference>
<dbReference type="RefSeq" id="WP_004688441.1">
    <property type="nucleotide sequence ID" value="NC_010103.1"/>
</dbReference>
<dbReference type="SMR" id="A9M5J8"/>
<dbReference type="GeneID" id="55590862"/>
<dbReference type="KEGG" id="bcs:BCAN_A1204"/>
<dbReference type="HOGENOM" id="CLU_102489_0_1_5"/>
<dbReference type="PhylomeDB" id="A9M5J8"/>
<dbReference type="UniPathway" id="UPA00392"/>
<dbReference type="Proteomes" id="UP000001385">
    <property type="component" value="Chromosome I"/>
</dbReference>
<dbReference type="GO" id="GO:0005737">
    <property type="term" value="C:cytoplasm"/>
    <property type="evidence" value="ECO:0007669"/>
    <property type="project" value="UniProtKB-SubCell"/>
</dbReference>
<dbReference type="GO" id="GO:0033739">
    <property type="term" value="F:preQ1 synthase activity"/>
    <property type="evidence" value="ECO:0007669"/>
    <property type="project" value="UniProtKB-UniRule"/>
</dbReference>
<dbReference type="GO" id="GO:0008616">
    <property type="term" value="P:queuosine biosynthetic process"/>
    <property type="evidence" value="ECO:0007669"/>
    <property type="project" value="UniProtKB-UniRule"/>
</dbReference>
<dbReference type="GO" id="GO:0006400">
    <property type="term" value="P:tRNA modification"/>
    <property type="evidence" value="ECO:0007669"/>
    <property type="project" value="UniProtKB-UniRule"/>
</dbReference>
<dbReference type="Gene3D" id="3.30.1130.10">
    <property type="match status" value="1"/>
</dbReference>
<dbReference type="HAMAP" id="MF_00818">
    <property type="entry name" value="QueF_type1"/>
    <property type="match status" value="1"/>
</dbReference>
<dbReference type="InterPro" id="IPR043133">
    <property type="entry name" value="GTP-CH-I_C/QueF"/>
</dbReference>
<dbReference type="InterPro" id="IPR050084">
    <property type="entry name" value="NADPH_dep_7-cyano-7-deazaG_red"/>
</dbReference>
<dbReference type="InterPro" id="IPR029500">
    <property type="entry name" value="QueF"/>
</dbReference>
<dbReference type="InterPro" id="IPR016856">
    <property type="entry name" value="QueF_type1"/>
</dbReference>
<dbReference type="NCBIfam" id="TIGR03139">
    <property type="entry name" value="QueF-II"/>
    <property type="match status" value="1"/>
</dbReference>
<dbReference type="PANTHER" id="PTHR34354">
    <property type="entry name" value="NADPH-DEPENDENT 7-CYANO-7-DEAZAGUANINE REDUCTASE"/>
    <property type="match status" value="1"/>
</dbReference>
<dbReference type="PANTHER" id="PTHR34354:SF1">
    <property type="entry name" value="NADPH-DEPENDENT 7-CYANO-7-DEAZAGUANINE REDUCTASE"/>
    <property type="match status" value="1"/>
</dbReference>
<dbReference type="Pfam" id="PF14489">
    <property type="entry name" value="QueF"/>
    <property type="match status" value="1"/>
</dbReference>
<dbReference type="SUPFAM" id="SSF55620">
    <property type="entry name" value="Tetrahydrobiopterin biosynthesis enzymes-like"/>
    <property type="match status" value="1"/>
</dbReference>
<organism>
    <name type="scientific">Brucella canis (strain ATCC 23365 / NCTC 10854 / RM-666)</name>
    <dbReference type="NCBI Taxonomy" id="483179"/>
    <lineage>
        <taxon>Bacteria</taxon>
        <taxon>Pseudomonadati</taxon>
        <taxon>Pseudomonadota</taxon>
        <taxon>Alphaproteobacteria</taxon>
        <taxon>Hyphomicrobiales</taxon>
        <taxon>Brucellaceae</taxon>
        <taxon>Brucella/Ochrobactrum group</taxon>
        <taxon>Brucella</taxon>
    </lineage>
</organism>
<reference key="1">
    <citation type="submission" date="2007-10" db="EMBL/GenBank/DDBJ databases">
        <title>Brucella canis ATCC 23365 whole genome shotgun sequencing project.</title>
        <authorList>
            <person name="Setubal J.C."/>
            <person name="Bowns C."/>
            <person name="Boyle S."/>
            <person name="Crasta O.R."/>
            <person name="Czar M.J."/>
            <person name="Dharmanolla C."/>
            <person name="Gillespie J.J."/>
            <person name="Kenyon R.W."/>
            <person name="Lu J."/>
            <person name="Mane S."/>
            <person name="Mohapatra S."/>
            <person name="Nagrani S."/>
            <person name="Purkayastha A."/>
            <person name="Rajasimha H.K."/>
            <person name="Shallom J.M."/>
            <person name="Shallom S."/>
            <person name="Shukla M."/>
            <person name="Snyder E.E."/>
            <person name="Sobral B.W."/>
            <person name="Wattam A.R."/>
            <person name="Will R."/>
            <person name="Williams K."/>
            <person name="Yoo H."/>
            <person name="Bruce D."/>
            <person name="Detter C."/>
            <person name="Munk C."/>
            <person name="Brettin T.S."/>
        </authorList>
    </citation>
    <scope>NUCLEOTIDE SEQUENCE [LARGE SCALE GENOMIC DNA]</scope>
    <source>
        <strain>ATCC 23365 / NCTC 10854 / RM-666</strain>
    </source>
</reference>
<name>QUEF_BRUC2</name>
<sequence length="155" mass="17416">MSENTIYSGLKQLGSHTDIPLTPEEAVLERVANPQEGTPYCVRFTAPEFTSLCPMTGQPDFAHLVIDYVPGKWLVESKSLKLFLFSFRNHGAFHEDCTVTIGKRLVDLLEPEWLRIGGYWYPRGGIPIDVFYQTGAAPLNVWIPEQGVANYRGRG</sequence>
<feature type="chain" id="PRO_1000083834" description="NADPH-dependent 7-cyano-7-deazaguanine reductase">
    <location>
        <begin position="1"/>
        <end position="155"/>
    </location>
</feature>
<feature type="active site" description="Thioimide intermediate" evidence="1">
    <location>
        <position position="53"/>
    </location>
</feature>
<feature type="active site" description="Proton donor" evidence="1">
    <location>
        <position position="60"/>
    </location>
</feature>
<feature type="binding site" evidence="1">
    <location>
        <begin position="75"/>
        <end position="77"/>
    </location>
    <ligand>
        <name>substrate</name>
    </ligand>
</feature>
<feature type="binding site" evidence="1">
    <location>
        <begin position="94"/>
        <end position="95"/>
    </location>
    <ligand>
        <name>substrate</name>
    </ligand>
</feature>
<protein>
    <recommendedName>
        <fullName evidence="1">NADPH-dependent 7-cyano-7-deazaguanine reductase</fullName>
        <ecNumber evidence="1">1.7.1.13</ecNumber>
    </recommendedName>
    <alternativeName>
        <fullName evidence="1">7-cyano-7-carbaguanine reductase</fullName>
    </alternativeName>
    <alternativeName>
        <fullName evidence="1">NADPH-dependent nitrile oxidoreductase</fullName>
    </alternativeName>
    <alternativeName>
        <fullName evidence="1">PreQ(0) reductase</fullName>
    </alternativeName>
</protein>
<accession>A9M5J8</accession>
<keyword id="KW-0963">Cytoplasm</keyword>
<keyword id="KW-0521">NADP</keyword>
<keyword id="KW-0560">Oxidoreductase</keyword>
<keyword id="KW-0671">Queuosine biosynthesis</keyword>
<keyword id="KW-1185">Reference proteome</keyword>
<comment type="function">
    <text evidence="1">Catalyzes the NADPH-dependent reduction of 7-cyano-7-deazaguanine (preQ0) to 7-aminomethyl-7-deazaguanine (preQ1).</text>
</comment>
<comment type="catalytic activity">
    <reaction evidence="1">
        <text>7-aminomethyl-7-carbaguanine + 2 NADP(+) = 7-cyano-7-deazaguanine + 2 NADPH + 3 H(+)</text>
        <dbReference type="Rhea" id="RHEA:13409"/>
        <dbReference type="ChEBI" id="CHEBI:15378"/>
        <dbReference type="ChEBI" id="CHEBI:45075"/>
        <dbReference type="ChEBI" id="CHEBI:57783"/>
        <dbReference type="ChEBI" id="CHEBI:58349"/>
        <dbReference type="ChEBI" id="CHEBI:58703"/>
        <dbReference type="EC" id="1.7.1.13"/>
    </reaction>
</comment>
<comment type="pathway">
    <text evidence="1">tRNA modification; tRNA-queuosine biosynthesis.</text>
</comment>
<comment type="subcellular location">
    <subcellularLocation>
        <location evidence="1">Cytoplasm</location>
    </subcellularLocation>
</comment>
<comment type="similarity">
    <text evidence="1">Belongs to the GTP cyclohydrolase I family. QueF type 1 subfamily.</text>
</comment>